<dbReference type="EMBL" id="X87941">
    <property type="protein sequence ID" value="CAA61169.1"/>
    <property type="status" value="ALT_FRAME"/>
    <property type="molecule type" value="Genomic_DNA"/>
</dbReference>
<dbReference type="EMBL" id="Z73006">
    <property type="protein sequence ID" value="CAA97249.1"/>
    <property type="status" value="ALT_FRAME"/>
    <property type="molecule type" value="Genomic_DNA"/>
</dbReference>
<dbReference type="EMBL" id="BK006941">
    <property type="protein sequence ID" value="DAA08314.2"/>
    <property type="molecule type" value="Genomic_DNA"/>
</dbReference>
<dbReference type="PIR" id="S57684">
    <property type="entry name" value="S57684"/>
</dbReference>
<dbReference type="RefSeq" id="NP_011737.2">
    <property type="nucleotide sequence ID" value="NM_001181350.2"/>
</dbReference>
<dbReference type="SMR" id="P50078"/>
<dbReference type="BioGRID" id="33474">
    <property type="interactions" value="61"/>
</dbReference>
<dbReference type="DIP" id="DIP-2699N"/>
<dbReference type="FunCoup" id="P50078">
    <property type="interactions" value="50"/>
</dbReference>
<dbReference type="IntAct" id="P50078">
    <property type="interactions" value="2"/>
</dbReference>
<dbReference type="MINT" id="P50078"/>
<dbReference type="STRING" id="4932.YGR221C"/>
<dbReference type="iPTMnet" id="P50078"/>
<dbReference type="PaxDb" id="4932-YGR221C"/>
<dbReference type="PeptideAtlas" id="P50078"/>
<dbReference type="EnsemblFungi" id="YGR221C_mRNA">
    <property type="protein sequence ID" value="YGR221C"/>
    <property type="gene ID" value="YGR221C"/>
</dbReference>
<dbReference type="GeneID" id="853136"/>
<dbReference type="KEGG" id="sce:YGR221C"/>
<dbReference type="AGR" id="SGD:S000003453"/>
<dbReference type="SGD" id="S000003453">
    <property type="gene designation" value="TOS2"/>
</dbReference>
<dbReference type="VEuPathDB" id="FungiDB:YGR221C"/>
<dbReference type="GeneTree" id="ENSGT00940000176525"/>
<dbReference type="HOGENOM" id="CLU_026020_0_0_1"/>
<dbReference type="InParanoid" id="P50078"/>
<dbReference type="OMA" id="NAINFRV"/>
<dbReference type="OrthoDB" id="4035953at2759"/>
<dbReference type="BioCyc" id="YEAST:G3O-30902-MONOMER"/>
<dbReference type="BioGRID-ORCS" id="853136">
    <property type="hits" value="0 hits in 10 CRISPR screens"/>
</dbReference>
<dbReference type="PRO" id="PR:P50078"/>
<dbReference type="Proteomes" id="UP000002311">
    <property type="component" value="Chromosome VII"/>
</dbReference>
<dbReference type="RNAct" id="P50078">
    <property type="molecule type" value="protein"/>
</dbReference>
<dbReference type="GO" id="GO:0005933">
    <property type="term" value="C:cellular bud"/>
    <property type="evidence" value="ECO:0007005"/>
    <property type="project" value="SGD"/>
</dbReference>
<dbReference type="GO" id="GO:0033101">
    <property type="term" value="C:cellular bud membrane"/>
    <property type="evidence" value="ECO:0007669"/>
    <property type="project" value="UniProtKB-SubCell"/>
</dbReference>
<dbReference type="GO" id="GO:0005935">
    <property type="term" value="C:cellular bud neck"/>
    <property type="evidence" value="ECO:0000314"/>
    <property type="project" value="SGD"/>
</dbReference>
<dbReference type="GO" id="GO:0005934">
    <property type="term" value="C:cellular bud tip"/>
    <property type="evidence" value="ECO:0000314"/>
    <property type="project" value="SGD"/>
</dbReference>
<dbReference type="GO" id="GO:0000131">
    <property type="term" value="C:incipient cellular bud site"/>
    <property type="evidence" value="ECO:0000314"/>
    <property type="project" value="SGD"/>
</dbReference>
<dbReference type="GO" id="GO:0030427">
    <property type="term" value="C:site of polarized growth"/>
    <property type="evidence" value="ECO:0000316"/>
    <property type="project" value="SGD"/>
</dbReference>
<dbReference type="GO" id="GO:0032507">
    <property type="term" value="P:maintenance of protein location in cell"/>
    <property type="evidence" value="ECO:0000316"/>
    <property type="project" value="SGD"/>
</dbReference>
<dbReference type="GO" id="GO:1902413">
    <property type="term" value="P:negative regulation of mitotic cytokinesis"/>
    <property type="evidence" value="ECO:0000315"/>
    <property type="project" value="SGD"/>
</dbReference>
<dbReference type="InterPro" id="IPR014805">
    <property type="entry name" value="SKG6/TOS2-like"/>
</dbReference>
<dbReference type="Pfam" id="PF08693">
    <property type="entry name" value="SKG6"/>
    <property type="match status" value="2"/>
</dbReference>
<feature type="chain" id="PRO_0000072633" description="Protein TOS2">
    <location>
        <begin position="1"/>
        <end position="622"/>
    </location>
</feature>
<feature type="transmembrane region" description="Helical" evidence="1">
    <location>
        <begin position="42"/>
        <end position="62"/>
    </location>
</feature>
<feature type="region of interest" description="Disordered" evidence="2">
    <location>
        <begin position="181"/>
        <end position="233"/>
    </location>
</feature>
<feature type="compositionally biased region" description="Polar residues" evidence="2">
    <location>
        <begin position="181"/>
        <end position="201"/>
    </location>
</feature>
<feature type="compositionally biased region" description="Basic and acidic residues" evidence="2">
    <location>
        <begin position="202"/>
        <end position="214"/>
    </location>
</feature>
<protein>
    <recommendedName>
        <fullName>Protein TOS2</fullName>
    </recommendedName>
    <alternativeName>
        <fullName>Target of SBF 2</fullName>
    </alternativeName>
</protein>
<gene>
    <name type="primary">TOS2</name>
    <name type="ordered locus">YGR221C</name>
    <name type="ORF">G8523</name>
</gene>
<accession>P50078</accession>
<accession>D6VV03</accession>
<keyword id="KW-1003">Cell membrane</keyword>
<keyword id="KW-0472">Membrane</keyword>
<keyword id="KW-0597">Phosphoprotein</keyword>
<keyword id="KW-1185">Reference proteome</keyword>
<keyword id="KW-0812">Transmembrane</keyword>
<keyword id="KW-1133">Transmembrane helix</keyword>
<organism>
    <name type="scientific">Saccharomyces cerevisiae (strain ATCC 204508 / S288c)</name>
    <name type="common">Baker's yeast</name>
    <dbReference type="NCBI Taxonomy" id="559292"/>
    <lineage>
        <taxon>Eukaryota</taxon>
        <taxon>Fungi</taxon>
        <taxon>Dikarya</taxon>
        <taxon>Ascomycota</taxon>
        <taxon>Saccharomycotina</taxon>
        <taxon>Saccharomycetes</taxon>
        <taxon>Saccharomycetales</taxon>
        <taxon>Saccharomycetaceae</taxon>
        <taxon>Saccharomyces</taxon>
    </lineage>
</organism>
<evidence type="ECO:0000255" key="1"/>
<evidence type="ECO:0000256" key="2">
    <source>
        <dbReference type="SAM" id="MobiDB-lite"/>
    </source>
</evidence>
<evidence type="ECO:0000269" key="3">
    <source>
    </source>
</evidence>
<evidence type="ECO:0000269" key="4">
    <source>
    </source>
</evidence>
<evidence type="ECO:0000269" key="5">
    <source>
    </source>
</evidence>
<evidence type="ECO:0000305" key="6"/>
<proteinExistence type="evidence at protein level"/>
<reference key="1">
    <citation type="journal article" date="1996" name="Yeast">
        <title>Sequence analysis of the 43 kb CRM1-YLM9-PET54-DIE2-SMI1-PHO81-YHB4-PFK1 region from the right arm of Saccharomyces cerevisiae chromosome VII.</title>
        <authorList>
            <person name="van der Aart Q.J.M."/>
            <person name="Kleine K."/>
            <person name="Steensma H.Y."/>
        </authorList>
    </citation>
    <scope>NUCLEOTIDE SEQUENCE [GENOMIC DNA]</scope>
    <source>
        <strain>ATCC 204508 / S288c</strain>
    </source>
</reference>
<reference key="2">
    <citation type="journal article" date="1997" name="Nature">
        <title>The nucleotide sequence of Saccharomyces cerevisiae chromosome VII.</title>
        <authorList>
            <person name="Tettelin H."/>
            <person name="Agostoni-Carbone M.L."/>
            <person name="Albermann K."/>
            <person name="Albers M."/>
            <person name="Arroyo J."/>
            <person name="Backes U."/>
            <person name="Barreiros T."/>
            <person name="Bertani I."/>
            <person name="Bjourson A.J."/>
            <person name="Brueckner M."/>
            <person name="Bruschi C.V."/>
            <person name="Carignani G."/>
            <person name="Castagnoli L."/>
            <person name="Cerdan E."/>
            <person name="Clemente M.L."/>
            <person name="Coblenz A."/>
            <person name="Coglievina M."/>
            <person name="Coissac E."/>
            <person name="Defoor E."/>
            <person name="Del Bino S."/>
            <person name="Delius H."/>
            <person name="Delneri D."/>
            <person name="de Wergifosse P."/>
            <person name="Dujon B."/>
            <person name="Durand P."/>
            <person name="Entian K.-D."/>
            <person name="Eraso P."/>
            <person name="Escribano V."/>
            <person name="Fabiani L."/>
            <person name="Fartmann B."/>
            <person name="Feroli F."/>
            <person name="Feuermann M."/>
            <person name="Frontali L."/>
            <person name="Garcia-Gonzalez M."/>
            <person name="Garcia-Saez M.I."/>
            <person name="Goffeau A."/>
            <person name="Guerreiro P."/>
            <person name="Hani J."/>
            <person name="Hansen M."/>
            <person name="Hebling U."/>
            <person name="Hernandez K."/>
            <person name="Heumann K."/>
            <person name="Hilger F."/>
            <person name="Hofmann B."/>
            <person name="Indge K.J."/>
            <person name="James C.M."/>
            <person name="Klima R."/>
            <person name="Koetter P."/>
            <person name="Kramer B."/>
            <person name="Kramer W."/>
            <person name="Lauquin G."/>
            <person name="Leuther H."/>
            <person name="Louis E.J."/>
            <person name="Maillier E."/>
            <person name="Marconi A."/>
            <person name="Martegani E."/>
            <person name="Mazon M.J."/>
            <person name="Mazzoni C."/>
            <person name="McReynolds A.D.K."/>
            <person name="Melchioretto P."/>
            <person name="Mewes H.-W."/>
            <person name="Minenkova O."/>
            <person name="Mueller-Auer S."/>
            <person name="Nawrocki A."/>
            <person name="Netter P."/>
            <person name="Neu R."/>
            <person name="Nombela C."/>
            <person name="Oliver S.G."/>
            <person name="Panzeri L."/>
            <person name="Paoluzi S."/>
            <person name="Plevani P."/>
            <person name="Portetelle D."/>
            <person name="Portillo F."/>
            <person name="Potier S."/>
            <person name="Purnelle B."/>
            <person name="Rieger M."/>
            <person name="Riles L."/>
            <person name="Rinaldi T."/>
            <person name="Robben J."/>
            <person name="Rodrigues-Pousada C."/>
            <person name="Rodriguez-Belmonte E."/>
            <person name="Rodriguez-Torres A.M."/>
            <person name="Rose M."/>
            <person name="Ruzzi M."/>
            <person name="Saliola M."/>
            <person name="Sanchez-Perez M."/>
            <person name="Schaefer B."/>
            <person name="Schaefer M."/>
            <person name="Scharfe M."/>
            <person name="Schmidheini T."/>
            <person name="Schreer A."/>
            <person name="Skala J."/>
            <person name="Souciet J.-L."/>
            <person name="Steensma H.Y."/>
            <person name="Talla E."/>
            <person name="Thierry A."/>
            <person name="Vandenbol M."/>
            <person name="van der Aart Q.J.M."/>
            <person name="Van Dyck L."/>
            <person name="Vanoni M."/>
            <person name="Verhasselt P."/>
            <person name="Voet M."/>
            <person name="Volckaert G."/>
            <person name="Wambutt R."/>
            <person name="Watson M.D."/>
            <person name="Weber N."/>
            <person name="Wedler E."/>
            <person name="Wedler H."/>
            <person name="Wipfli P."/>
            <person name="Wolf K."/>
            <person name="Wright L.F."/>
            <person name="Zaccaria P."/>
            <person name="Zimmermann M."/>
            <person name="Zollner A."/>
            <person name="Kleine K."/>
        </authorList>
    </citation>
    <scope>NUCLEOTIDE SEQUENCE [LARGE SCALE GENOMIC DNA]</scope>
    <source>
        <strain>ATCC 204508 / S288c</strain>
    </source>
</reference>
<reference key="3">
    <citation type="journal article" date="2014" name="G3 (Bethesda)">
        <title>The reference genome sequence of Saccharomyces cerevisiae: Then and now.</title>
        <authorList>
            <person name="Engel S.R."/>
            <person name="Dietrich F.S."/>
            <person name="Fisk D.G."/>
            <person name="Binkley G."/>
            <person name="Balakrishnan R."/>
            <person name="Costanzo M.C."/>
            <person name="Dwight S.S."/>
            <person name="Hitz B.C."/>
            <person name="Karra K."/>
            <person name="Nash R.S."/>
            <person name="Weng S."/>
            <person name="Wong E.D."/>
            <person name="Lloyd P."/>
            <person name="Skrzypek M.S."/>
            <person name="Miyasato S.R."/>
            <person name="Simison M."/>
            <person name="Cherry J.M."/>
        </authorList>
    </citation>
    <scope>GENOME REANNOTATION</scope>
    <scope>SEQUENCE REVISION TO 69 AND 91</scope>
    <source>
        <strain>ATCC 204508 / S288c</strain>
    </source>
</reference>
<reference key="4">
    <citation type="journal article" date="2003" name="Nature">
        <title>Global analysis of protein expression in yeast.</title>
        <authorList>
            <person name="Ghaemmaghami S."/>
            <person name="Huh W.-K."/>
            <person name="Bower K."/>
            <person name="Howson R.W."/>
            <person name="Belle A."/>
            <person name="Dephoure N."/>
            <person name="O'Shea E.K."/>
            <person name="Weissman J.S."/>
        </authorList>
    </citation>
    <scope>LEVEL OF PROTEIN EXPRESSION [LARGE SCALE ANALYSIS]</scope>
</reference>
<reference key="5">
    <citation type="journal article" date="2003" name="Nature">
        <title>Targets of the cyclin-dependent kinase Cdk1.</title>
        <authorList>
            <person name="Ubersax J.A."/>
            <person name="Woodbury E.L."/>
            <person name="Quang P.N."/>
            <person name="Paraz M."/>
            <person name="Blethrow J.D."/>
            <person name="Shah K."/>
            <person name="Shokat K.M."/>
            <person name="Morgan D.O."/>
        </authorList>
    </citation>
    <scope>PHOSPHORYLATION BY CDC28</scope>
</reference>
<reference key="6">
    <citation type="journal article" date="2004" name="Curr. Genet.">
        <title>Separate membrane targeting and anchoring domains function in the localization of the S. cerevisiae Cdc24p guanine nucleotide exchange factor.</title>
        <authorList>
            <person name="Toenjes K.A."/>
            <person name="Simpson D."/>
            <person name="Johnson D.I."/>
        </authorList>
    </citation>
    <scope>FUNCTION IN ANCHORING OF CDC24</scope>
</reference>
<name>TOS2_YEAST</name>
<comment type="function">
    <text evidence="5">Seems to be involved in the anchoring of CDC24 to the membrane of polarized growth sites.</text>
</comment>
<comment type="subcellular location">
    <subcellularLocation>
        <location evidence="6">Cell membrane</location>
        <topology evidence="6">Single-pass membrane protein</topology>
    </subcellularLocation>
    <subcellularLocation>
        <location evidence="6">Bud membrane</location>
        <topology evidence="6">Single-pass membrane protein</topology>
    </subcellularLocation>
</comment>
<comment type="PTM">
    <text evidence="4">Phosphorylated by CDC28.</text>
</comment>
<comment type="miscellaneous">
    <text evidence="3">Present with 56 molecules/cell in log phase SD medium.</text>
</comment>
<comment type="similarity">
    <text evidence="6">Belongs to the SKG6/TOS2 family.</text>
</comment>
<comment type="sequence caution" evidence="6">
    <conflict type="frameshift">
        <sequence resource="EMBL-CDS" id="CAA61169"/>
    </conflict>
</comment>
<comment type="sequence caution" evidence="6">
    <conflict type="frameshift">
        <sequence resource="EMBL-CDS" id="CAA97249"/>
    </conflict>
</comment>
<sequence length="622" mass="69471">MFSHYRYKENSCQKREAIPDKSRVSLTFLQKRTDSSNVTVAVAVAVPIGAIIIVLSVVLIVVYRRCKKEPSMQDFDPNFEGDLYYLPKMDSSMNSANSDSNATEKRFIYGGYDDFLQPSIENSQSFKDYVRRINEHAPSAYNIASLASQNNSKLSVPSKHIDLSNKISFESLENSELIVSPQHSNTGQDCDQRCDSTSNPDVNEKSSHNNDNRLKSNYTSRSGLEPQCSREEEENIDRIRSIYNIYFEKSNSTIRSSVTSSIRRDSKLNIATRKSVNMSSQDNPNDTTLIEQSHFGSTTVQEIDSSSSANEEYEDATDYLQVPAPQENKNIASSVYSEVATREKVIPESSLSLTFPPPNGLSTRITSSIYSDTVAKDHIHSAKAPVRALSEGSGQSNLTSAQQYSTYFIDHCNQSNDDNYYYNYPLPLEHPQNYENIGDLPTPTQFIYSTSSHSLTSFKGRPKPPKTLKHVPTARLNGTALNPMDHPEMFYSSPTKIPSTSLTKQFCTPLPYQLRQSVVMTNPSELSMKPRYKPAGSLRNLIKAQYLPGNSSTTTSSSLSQPPSTLSNAINFRVSGLLDDTDILQPPSVGEILPFKASTEDLRKQLGTSHNYEITPYENVHV</sequence>